<accession>Q6LCK1</accession>
<evidence type="ECO:0000250" key="1"/>
<evidence type="ECO:0000250" key="2">
    <source>
        <dbReference type="UniProtKB" id="P59226"/>
    </source>
</evidence>
<evidence type="ECO:0000256" key="3">
    <source>
        <dbReference type="SAM" id="MobiDB-lite"/>
    </source>
</evidence>
<evidence type="ECO:0000305" key="4"/>
<keyword id="KW-0007">Acetylation</keyword>
<keyword id="KW-0158">Chromosome</keyword>
<keyword id="KW-0238">DNA-binding</keyword>
<keyword id="KW-0488">Methylation</keyword>
<keyword id="KW-0544">Nucleosome core</keyword>
<keyword id="KW-0539">Nucleus</keyword>
<keyword id="KW-0597">Phosphoprotein</keyword>
<comment type="function">
    <text>Core component of nucleosome. Nucleosomes wrap and compact DNA into chromatin, limiting DNA accessibility to the cellular machineries which require DNA as a template. Histones thereby play a central role in transcription regulation, DNA repair, DNA replication and chromosomal stability. DNA accessibility is regulated via a complex set of post-translational modifications of histones, also called histone code, and nucleosome remodeling.</text>
</comment>
<comment type="subunit">
    <text>The nucleosome is a histone octamer containing two molecules each of H2A, H2B, H3 and H4 assembled in one H3-H4 heterotetramer and two H2A-H2B heterodimers. The octamer wraps approximately 147 bp of DNA.</text>
</comment>
<comment type="subcellular location">
    <subcellularLocation>
        <location evidence="1">Nucleus</location>
    </subcellularLocation>
    <subcellularLocation>
        <location evidence="1">Chromosome</location>
    </subcellularLocation>
</comment>
<comment type="PTM">
    <text evidence="1">Acetylation is generally linked to gene activation. Can be acetylated to form H3K9ac, H3K14ac, H3K18ac and H3K23ac. H3K9ac could compete with H3K9me and prevent gene silencing. H3K9ac is restricted to euchromatin (By similarity).</text>
</comment>
<comment type="PTM">
    <text evidence="1">Methylated to form mainly H3K4me, H3K9me, H3K18me, H3K23me, H3K27me and H3K36me. H3K4me1/2/3, H3K9me3, H3K27me3 and H3K36me1/2/3 are typical marks for euchromatin, whereas heterochromatic chromocenters are enriched in H3K9me1/2 and H3K27me1/2. H2BK143ub1 is probably prerequisite for H3K4me (By similarity).</text>
</comment>
<comment type="PTM">
    <text evidence="1">Can be phosphorylated to form H3S10ph, H3T11ph and H3S28ph.</text>
</comment>
<comment type="similarity">
    <text evidence="4">Belongs to the histone H3 family.</text>
</comment>
<comment type="caution">
    <text evidence="4">To ensure consistency between histone entries, we follow the 'Brno' nomenclature for histone modifications, with positions referring to those used in the literature for the 'closest' model organism. Due to slight variations in histone sequences between organisms and to the presence of initiator methionine in UniProtKB/Swiss-Prot sequences, the actual positions of modified amino acids in the sequence generally differ. In this entry the following conventions are used: H3K4me = methylated Lys-5; H3K9ac = acetylated Lys-10; H3K9me = methylated Lys-10; H3S10ph = phosphorylated Ser-11; H3T11ph = phosphorylated Thr-12; H3K14ac = acetylated Lys-15; H3K18ac = acetylated Lys-19; H3K18me = methylated Lys-19; H3K23ac = acetylated Lys-24; H3K23me = methylated Lys-24; H3K27me = methylated Lys-28; H3S28ph = phosphorylated Ser-29; H3K36me = methylated Lys-37.</text>
</comment>
<feature type="chain" id="PRO_0000221270" description="Histone H3.2">
    <location>
        <begin position="1"/>
        <end position="136"/>
    </location>
</feature>
<feature type="region of interest" description="Disordered" evidence="3">
    <location>
        <begin position="1"/>
        <end position="43"/>
    </location>
</feature>
<feature type="modified residue" description="N6,N6,N6-trimethyllysine; alternate" evidence="2">
    <location>
        <position position="5"/>
    </location>
</feature>
<feature type="modified residue" description="N6,N6-dimethyllysine; alternate" evidence="2">
    <location>
        <position position="5"/>
    </location>
</feature>
<feature type="modified residue" description="N6-methyllysine; alternate" evidence="2">
    <location>
        <position position="5"/>
    </location>
</feature>
<feature type="modified residue" description="N6,N6,N6-trimethyllysine; alternate" evidence="2">
    <location>
        <position position="10"/>
    </location>
</feature>
<feature type="modified residue" description="N6,N6-dimethyllysine; alternate" evidence="2">
    <location>
        <position position="10"/>
    </location>
</feature>
<feature type="modified residue" description="N6-acetyllysine; alternate" evidence="2">
    <location>
        <position position="10"/>
    </location>
</feature>
<feature type="modified residue" description="N6-methyllysine; alternate" evidence="2">
    <location>
        <position position="10"/>
    </location>
</feature>
<feature type="modified residue" description="Phosphoserine" evidence="2">
    <location>
        <position position="11"/>
    </location>
</feature>
<feature type="modified residue" description="Phosphothreonine" evidence="2">
    <location>
        <position position="12"/>
    </location>
</feature>
<feature type="modified residue" description="N6-acetyllysine" evidence="2">
    <location>
        <position position="15"/>
    </location>
</feature>
<feature type="modified residue" description="N6-acetyllysine; alternate" evidence="2">
    <location>
        <position position="19"/>
    </location>
</feature>
<feature type="modified residue" description="N6-methyllysine; alternate" evidence="2">
    <location>
        <position position="19"/>
    </location>
</feature>
<feature type="modified residue" description="N6-acetyllysine; alternate" evidence="2">
    <location>
        <position position="24"/>
    </location>
</feature>
<feature type="modified residue" description="N6-methyllysine; alternate" evidence="2">
    <location>
        <position position="24"/>
    </location>
</feature>
<feature type="modified residue" description="N6,N6,N6-trimethyllysine; alternate" evidence="2">
    <location>
        <position position="28"/>
    </location>
</feature>
<feature type="modified residue" description="N6,N6-dimethyllysine; alternate" evidence="2">
    <location>
        <position position="28"/>
    </location>
</feature>
<feature type="modified residue" description="N6-methyllysine; alternate" evidence="2">
    <location>
        <position position="28"/>
    </location>
</feature>
<feature type="modified residue" description="Phosphoserine" evidence="2">
    <location>
        <position position="29"/>
    </location>
</feature>
<feature type="modified residue" description="N6,N6,N6-trimethyllysine; alternate" evidence="2">
    <location>
        <position position="37"/>
    </location>
</feature>
<feature type="modified residue" description="N6,N6-dimethyllysine; alternate" evidence="2">
    <location>
        <position position="37"/>
    </location>
</feature>
<feature type="modified residue" description="N6-methyllysine; alternate" evidence="2">
    <location>
        <position position="37"/>
    </location>
</feature>
<protein>
    <recommendedName>
        <fullName>Histone H3.2</fullName>
    </recommendedName>
</protein>
<organism>
    <name type="scientific">Brassica napus</name>
    <name type="common">Rape</name>
    <dbReference type="NCBI Taxonomy" id="3708"/>
    <lineage>
        <taxon>Eukaryota</taxon>
        <taxon>Viridiplantae</taxon>
        <taxon>Streptophyta</taxon>
        <taxon>Embryophyta</taxon>
        <taxon>Tracheophyta</taxon>
        <taxon>Spermatophyta</taxon>
        <taxon>Magnoliopsida</taxon>
        <taxon>eudicotyledons</taxon>
        <taxon>Gunneridae</taxon>
        <taxon>Pentapetalae</taxon>
        <taxon>rosids</taxon>
        <taxon>malvids</taxon>
        <taxon>Brassicales</taxon>
        <taxon>Brassicaceae</taxon>
        <taxon>Brassiceae</taxon>
        <taxon>Brassica</taxon>
    </lineage>
</organism>
<reference key="1">
    <citation type="online journal article" date="1996" name="Plant Gene Register">
        <title>Nucleotide sequence of a Brassica napus histone H3 homolog.</title>
        <authorList>
            <person name="Kourtz L."/>
            <person name="Pollett J."/>
            <person name="Ko K."/>
        </authorList>
        <locator>PGR96-041</locator>
    </citation>
    <scope>NUCLEOTIDE SEQUENCE [MRNA]</scope>
    <source>
        <strain>cv. Topas</strain>
    </source>
</reference>
<proteinExistence type="evidence at transcript level"/>
<name>H32_BRANA</name>
<sequence length="136" mass="15268">MARTKQTARKSTGGKAPRKQLATKAARKSAPATGGVKKPHRFRPGTVALREIRKYQKSTELLIRKLPFQRLVREIAQDFKTDLRFQSSAVAALQEAAEAYLVGLFEDTNLCAIHAKRVTIMPKDIQLARRIRGERA</sequence>
<dbReference type="EMBL" id="U54827">
    <property type="protein sequence ID" value="AAB67837.1"/>
    <property type="molecule type" value="mRNA"/>
</dbReference>
<dbReference type="RefSeq" id="NP_001412486.1">
    <property type="nucleotide sequence ID" value="NM_001425557.1"/>
</dbReference>
<dbReference type="RefSeq" id="XP_013657686.1">
    <property type="nucleotide sequence ID" value="XM_013802232.3"/>
</dbReference>
<dbReference type="RefSeq" id="XP_013677697.1">
    <property type="nucleotide sequence ID" value="XM_013822243.1"/>
</dbReference>
<dbReference type="RefSeq" id="XP_013678750.1">
    <property type="nucleotide sequence ID" value="XM_013823296.3"/>
</dbReference>
<dbReference type="RefSeq" id="XP_013680280.1">
    <property type="nucleotide sequence ID" value="XM_013824826.1"/>
</dbReference>
<dbReference type="RefSeq" id="XP_013686742.1">
    <property type="nucleotide sequence ID" value="XM_013831288.3"/>
</dbReference>
<dbReference type="RefSeq" id="XP_013686743.2">
    <property type="nucleotide sequence ID" value="XM_013831289.3"/>
</dbReference>
<dbReference type="RefSeq" id="XP_013686753.1">
    <property type="nucleotide sequence ID" value="XM_013831299.3"/>
</dbReference>
<dbReference type="RefSeq" id="XP_013698649.1">
    <property type="nucleotide sequence ID" value="XM_013843195.3"/>
</dbReference>
<dbReference type="RefSeq" id="XP_013700674.1">
    <property type="nucleotide sequence ID" value="XM_013845220.1"/>
</dbReference>
<dbReference type="RefSeq" id="XP_013700675.1">
    <property type="nucleotide sequence ID" value="XM_013845221.1"/>
</dbReference>
<dbReference type="RefSeq" id="XP_013700676.1">
    <property type="nucleotide sequence ID" value="XM_013845222.1"/>
</dbReference>
<dbReference type="RefSeq" id="XP_013709910.2">
    <property type="nucleotide sequence ID" value="XM_013854456.3"/>
</dbReference>
<dbReference type="RefSeq" id="XP_013712760.1">
    <property type="nucleotide sequence ID" value="XM_013857306.3"/>
</dbReference>
<dbReference type="RefSeq" id="XP_013718218.1">
    <property type="nucleotide sequence ID" value="XM_013862764.3"/>
</dbReference>
<dbReference type="RefSeq" id="XP_013718219.1">
    <property type="nucleotide sequence ID" value="XM_013862765.1"/>
</dbReference>
<dbReference type="RefSeq" id="XP_013726586.1">
    <property type="nucleotide sequence ID" value="XM_013871132.3"/>
</dbReference>
<dbReference type="RefSeq" id="XP_013731494.1">
    <property type="nucleotide sequence ID" value="XM_013876040.3"/>
</dbReference>
<dbReference type="RefSeq" id="XP_013733475.1">
    <property type="nucleotide sequence ID" value="XM_013878021.1"/>
</dbReference>
<dbReference type="RefSeq" id="XP_013738537.1">
    <property type="nucleotide sequence ID" value="XM_013883083.3"/>
</dbReference>
<dbReference type="RefSeq" id="XP_013742827.1">
    <property type="nucleotide sequence ID" value="XM_013887373.1"/>
</dbReference>
<dbReference type="RefSeq" id="XP_013742828.1">
    <property type="nucleotide sequence ID" value="XM_013887374.1"/>
</dbReference>
<dbReference type="RefSeq" id="XP_013750874.1">
    <property type="nucleotide sequence ID" value="XM_013895420.3"/>
</dbReference>
<dbReference type="RefSeq" id="XP_048601368.1">
    <property type="nucleotide sequence ID" value="XM_048745411.1"/>
</dbReference>
<dbReference type="RefSeq" id="XP_048626247.1">
    <property type="nucleotide sequence ID" value="XM_048770290.1"/>
</dbReference>
<dbReference type="RefSeq" id="XP_048626251.1">
    <property type="nucleotide sequence ID" value="XM_048770294.1"/>
</dbReference>
<dbReference type="RefSeq" id="XP_048627501.1">
    <property type="nucleotide sequence ID" value="XM_048771544.1"/>
</dbReference>
<dbReference type="RefSeq" id="XP_048627503.1">
    <property type="nucleotide sequence ID" value="XM_048771546.1"/>
</dbReference>
<dbReference type="SMR" id="Q6LCK1"/>
<dbReference type="EnsemblPlants" id="CDX69839">
    <property type="protein sequence ID" value="CDX69839"/>
    <property type="gene ID" value="GSBRNA2T00135898001"/>
</dbReference>
<dbReference type="EnsemblPlants" id="CDX96998">
    <property type="protein sequence ID" value="CDX96998"/>
    <property type="gene ID" value="GSBRNA2T00103947001"/>
</dbReference>
<dbReference type="GeneID" id="106362349"/>
<dbReference type="GeneID" id="106382248"/>
<dbReference type="GeneID" id="106383153"/>
<dbReference type="GeneID" id="106390758"/>
<dbReference type="GeneID" id="106390759"/>
<dbReference type="GeneID" id="106390768"/>
<dbReference type="GeneID" id="106402456"/>
<dbReference type="GeneID" id="106404496"/>
<dbReference type="GeneID" id="106413709"/>
<dbReference type="GeneID" id="106416431"/>
<dbReference type="GeneID" id="106421938"/>
<dbReference type="GeneID" id="106430342"/>
<dbReference type="GeneID" id="106435178"/>
<dbReference type="GeneID" id="106441254"/>
<dbReference type="GeneID" id="106453164"/>
<dbReference type="GeneID" id="125580626"/>
<dbReference type="GeneID" id="125593931"/>
<dbReference type="GeneID" id="125593942"/>
<dbReference type="GeneID" id="125596395"/>
<dbReference type="GeneID" id="125596398"/>
<dbReference type="Gramene" id="CDX69839">
    <property type="protein sequence ID" value="CDX69839"/>
    <property type="gene ID" value="GSBRNA2T00135898001"/>
</dbReference>
<dbReference type="Gramene" id="CDX96998">
    <property type="protein sequence ID" value="CDX96998"/>
    <property type="gene ID" value="GSBRNA2T00103947001"/>
</dbReference>
<dbReference type="KEGG" id="bna:106362349"/>
<dbReference type="KEGG" id="bna:106383153"/>
<dbReference type="KEGG" id="bna:106390758"/>
<dbReference type="KEGG" id="bna:106390759"/>
<dbReference type="KEGG" id="bna:106390768"/>
<dbReference type="KEGG" id="bna:106402456"/>
<dbReference type="KEGG" id="bna:106404496"/>
<dbReference type="KEGG" id="bna:106413709"/>
<dbReference type="KEGG" id="bna:106416431"/>
<dbReference type="KEGG" id="bna:106421938"/>
<dbReference type="KEGG" id="bna:106430342"/>
<dbReference type="KEGG" id="bna:106435178"/>
<dbReference type="KEGG" id="bna:106441254"/>
<dbReference type="KEGG" id="bna:106453164"/>
<dbReference type="OMA" id="ANDCAIH"/>
<dbReference type="OrthoDB" id="1650135at2759"/>
<dbReference type="GO" id="GO:0000786">
    <property type="term" value="C:nucleosome"/>
    <property type="evidence" value="ECO:0007669"/>
    <property type="project" value="UniProtKB-KW"/>
</dbReference>
<dbReference type="GO" id="GO:0005634">
    <property type="term" value="C:nucleus"/>
    <property type="evidence" value="ECO:0007669"/>
    <property type="project" value="UniProtKB-SubCell"/>
</dbReference>
<dbReference type="GO" id="GO:0003677">
    <property type="term" value="F:DNA binding"/>
    <property type="evidence" value="ECO:0007669"/>
    <property type="project" value="UniProtKB-KW"/>
</dbReference>
<dbReference type="GO" id="GO:0046982">
    <property type="term" value="F:protein heterodimerization activity"/>
    <property type="evidence" value="ECO:0007669"/>
    <property type="project" value="InterPro"/>
</dbReference>
<dbReference type="GO" id="GO:0030527">
    <property type="term" value="F:structural constituent of chromatin"/>
    <property type="evidence" value="ECO:0007669"/>
    <property type="project" value="InterPro"/>
</dbReference>
<dbReference type="CDD" id="cd22911">
    <property type="entry name" value="HFD_H3"/>
    <property type="match status" value="1"/>
</dbReference>
<dbReference type="FunFam" id="1.10.20.10:FF:000078">
    <property type="entry name" value="Histone H3"/>
    <property type="match status" value="1"/>
</dbReference>
<dbReference type="FunFam" id="1.10.20.10:FF:000044">
    <property type="entry name" value="Histone H3.3"/>
    <property type="match status" value="1"/>
</dbReference>
<dbReference type="Gene3D" id="1.10.20.10">
    <property type="entry name" value="Histone, subunit A"/>
    <property type="match status" value="1"/>
</dbReference>
<dbReference type="InterPro" id="IPR009072">
    <property type="entry name" value="Histone-fold"/>
</dbReference>
<dbReference type="InterPro" id="IPR007125">
    <property type="entry name" value="Histone_H2A/H2B/H3"/>
</dbReference>
<dbReference type="InterPro" id="IPR000164">
    <property type="entry name" value="Histone_H3/CENP-A"/>
</dbReference>
<dbReference type="PANTHER" id="PTHR11426">
    <property type="entry name" value="HISTONE H3"/>
    <property type="match status" value="1"/>
</dbReference>
<dbReference type="Pfam" id="PF00125">
    <property type="entry name" value="Histone"/>
    <property type="match status" value="1"/>
</dbReference>
<dbReference type="PRINTS" id="PR00622">
    <property type="entry name" value="HISTONEH3"/>
</dbReference>
<dbReference type="SMART" id="SM00428">
    <property type="entry name" value="H3"/>
    <property type="match status" value="1"/>
</dbReference>
<dbReference type="SUPFAM" id="SSF47113">
    <property type="entry name" value="Histone-fold"/>
    <property type="match status" value="1"/>
</dbReference>
<dbReference type="PROSITE" id="PS00322">
    <property type="entry name" value="HISTONE_H3_1"/>
    <property type="match status" value="1"/>
</dbReference>
<dbReference type="PROSITE" id="PS00959">
    <property type="entry name" value="HISTONE_H3_2"/>
    <property type="match status" value="1"/>
</dbReference>